<keyword id="KW-0030">Aminoacyl-tRNA synthetase</keyword>
<keyword id="KW-0067">ATP-binding</keyword>
<keyword id="KW-0963">Cytoplasm</keyword>
<keyword id="KW-0436">Ligase</keyword>
<keyword id="KW-0547">Nucleotide-binding</keyword>
<keyword id="KW-0648">Protein biosynthesis</keyword>
<feature type="chain" id="PRO_1000051451" description="Asparagine--tRNA ligase">
    <location>
        <begin position="1"/>
        <end position="448"/>
    </location>
</feature>
<comment type="catalytic activity">
    <reaction evidence="1">
        <text>tRNA(Asn) + L-asparagine + ATP = L-asparaginyl-tRNA(Asn) + AMP + diphosphate + H(+)</text>
        <dbReference type="Rhea" id="RHEA:11180"/>
        <dbReference type="Rhea" id="RHEA-COMP:9659"/>
        <dbReference type="Rhea" id="RHEA-COMP:9674"/>
        <dbReference type="ChEBI" id="CHEBI:15378"/>
        <dbReference type="ChEBI" id="CHEBI:30616"/>
        <dbReference type="ChEBI" id="CHEBI:33019"/>
        <dbReference type="ChEBI" id="CHEBI:58048"/>
        <dbReference type="ChEBI" id="CHEBI:78442"/>
        <dbReference type="ChEBI" id="CHEBI:78515"/>
        <dbReference type="ChEBI" id="CHEBI:456215"/>
        <dbReference type="EC" id="6.1.1.22"/>
    </reaction>
</comment>
<comment type="subunit">
    <text evidence="1">Homodimer.</text>
</comment>
<comment type="subcellular location">
    <subcellularLocation>
        <location evidence="1">Cytoplasm</location>
    </subcellularLocation>
</comment>
<comment type="similarity">
    <text evidence="1">Belongs to the class-II aminoacyl-tRNA synthetase family.</text>
</comment>
<proteinExistence type="inferred from homology"/>
<evidence type="ECO:0000255" key="1">
    <source>
        <dbReference type="HAMAP-Rule" id="MF_00534"/>
    </source>
</evidence>
<accession>Q5M067</accession>
<sequence>MSKQLVSIIDVPKHIGEEITIGAWVANKSGKGKIAFLQLRDGTAFFQGVAFKPNFIEKFGEEEGLEKFDTIKHLSQETSIYVTGMVKEDERSKFGYELDINDIEVIGKSQDYPITPKEHGTDFLMDNRHLWLRSRKQMAIQQIRNAIIYATYDFFDKNGFIKFDSPILSSNAAEDSTELFETDYFGTPAFLSQSGQLYLEAGAMALGRVFDFGPVFRAEKSKTRRHLTEFWMMDAEYSFLSHDESLDLQEAYVKALIQGAIDRAPQALEILERDVDLLKKYIAEPFKRVSYDEAIDLLQAHENDEDTDYEHLEHGDDFGSPHETWISNYFGVPTFVVNYPASFKAFYMKPVPGNPERVLCADLLAPEGYGEIIGGSMREDDYDALVAKMEELGMDRSEYEFYLDLRKYGSVPHGGFGIGIERMVTFVAGTKHIREAIPFPRMLHRIKP</sequence>
<dbReference type="EC" id="6.1.1.22" evidence="1"/>
<dbReference type="EMBL" id="CP000024">
    <property type="protein sequence ID" value="AAV62410.1"/>
    <property type="molecule type" value="Genomic_DNA"/>
</dbReference>
<dbReference type="RefSeq" id="WP_011227117.1">
    <property type="nucleotide sequence ID" value="NC_006449.1"/>
</dbReference>
<dbReference type="SMR" id="Q5M067"/>
<dbReference type="GeneID" id="66898706"/>
<dbReference type="KEGG" id="stc:str0818"/>
<dbReference type="HOGENOM" id="CLU_004553_2_0_9"/>
<dbReference type="GO" id="GO:0005737">
    <property type="term" value="C:cytoplasm"/>
    <property type="evidence" value="ECO:0007669"/>
    <property type="project" value="UniProtKB-SubCell"/>
</dbReference>
<dbReference type="GO" id="GO:0004816">
    <property type="term" value="F:asparagine-tRNA ligase activity"/>
    <property type="evidence" value="ECO:0007669"/>
    <property type="project" value="UniProtKB-UniRule"/>
</dbReference>
<dbReference type="GO" id="GO:0005524">
    <property type="term" value="F:ATP binding"/>
    <property type="evidence" value="ECO:0007669"/>
    <property type="project" value="UniProtKB-UniRule"/>
</dbReference>
<dbReference type="GO" id="GO:0140096">
    <property type="term" value="F:catalytic activity, acting on a protein"/>
    <property type="evidence" value="ECO:0007669"/>
    <property type="project" value="UniProtKB-ARBA"/>
</dbReference>
<dbReference type="GO" id="GO:0003676">
    <property type="term" value="F:nucleic acid binding"/>
    <property type="evidence" value="ECO:0007669"/>
    <property type="project" value="InterPro"/>
</dbReference>
<dbReference type="GO" id="GO:0016740">
    <property type="term" value="F:transferase activity"/>
    <property type="evidence" value="ECO:0007669"/>
    <property type="project" value="UniProtKB-ARBA"/>
</dbReference>
<dbReference type="GO" id="GO:0006421">
    <property type="term" value="P:asparaginyl-tRNA aminoacylation"/>
    <property type="evidence" value="ECO:0007669"/>
    <property type="project" value="UniProtKB-UniRule"/>
</dbReference>
<dbReference type="CDD" id="cd04323">
    <property type="entry name" value="AsnRS_cyto_like_N"/>
    <property type="match status" value="1"/>
</dbReference>
<dbReference type="CDD" id="cd00776">
    <property type="entry name" value="AsxRS_core"/>
    <property type="match status" value="1"/>
</dbReference>
<dbReference type="Gene3D" id="3.30.930.10">
    <property type="entry name" value="Bira Bifunctional Protein, Domain 2"/>
    <property type="match status" value="1"/>
</dbReference>
<dbReference type="Gene3D" id="2.40.50.140">
    <property type="entry name" value="Nucleic acid-binding proteins"/>
    <property type="match status" value="1"/>
</dbReference>
<dbReference type="HAMAP" id="MF_00534">
    <property type="entry name" value="Asn_tRNA_synth"/>
    <property type="match status" value="1"/>
</dbReference>
<dbReference type="InterPro" id="IPR004364">
    <property type="entry name" value="Aa-tRNA-synt_II"/>
</dbReference>
<dbReference type="InterPro" id="IPR006195">
    <property type="entry name" value="aa-tRNA-synth_II"/>
</dbReference>
<dbReference type="InterPro" id="IPR045864">
    <property type="entry name" value="aa-tRNA-synth_II/BPL/LPL"/>
</dbReference>
<dbReference type="InterPro" id="IPR004522">
    <property type="entry name" value="Asn-tRNA-ligase"/>
</dbReference>
<dbReference type="InterPro" id="IPR002312">
    <property type="entry name" value="Asp/Asn-tRNA-synth_IIb"/>
</dbReference>
<dbReference type="InterPro" id="IPR012340">
    <property type="entry name" value="NA-bd_OB-fold"/>
</dbReference>
<dbReference type="InterPro" id="IPR004365">
    <property type="entry name" value="NA-bd_OB_tRNA"/>
</dbReference>
<dbReference type="NCBIfam" id="TIGR00457">
    <property type="entry name" value="asnS"/>
    <property type="match status" value="1"/>
</dbReference>
<dbReference type="NCBIfam" id="NF003037">
    <property type="entry name" value="PRK03932.1"/>
    <property type="match status" value="1"/>
</dbReference>
<dbReference type="PANTHER" id="PTHR22594:SF34">
    <property type="entry name" value="ASPARAGINE--TRNA LIGASE, MITOCHONDRIAL-RELATED"/>
    <property type="match status" value="1"/>
</dbReference>
<dbReference type="PANTHER" id="PTHR22594">
    <property type="entry name" value="ASPARTYL/LYSYL-TRNA SYNTHETASE"/>
    <property type="match status" value="1"/>
</dbReference>
<dbReference type="Pfam" id="PF00152">
    <property type="entry name" value="tRNA-synt_2"/>
    <property type="match status" value="1"/>
</dbReference>
<dbReference type="Pfam" id="PF01336">
    <property type="entry name" value="tRNA_anti-codon"/>
    <property type="match status" value="1"/>
</dbReference>
<dbReference type="PRINTS" id="PR01042">
    <property type="entry name" value="TRNASYNTHASP"/>
</dbReference>
<dbReference type="SUPFAM" id="SSF55681">
    <property type="entry name" value="Class II aaRS and biotin synthetases"/>
    <property type="match status" value="1"/>
</dbReference>
<dbReference type="SUPFAM" id="SSF50249">
    <property type="entry name" value="Nucleic acid-binding proteins"/>
    <property type="match status" value="1"/>
</dbReference>
<dbReference type="PROSITE" id="PS50862">
    <property type="entry name" value="AA_TRNA_LIGASE_II"/>
    <property type="match status" value="1"/>
</dbReference>
<organism>
    <name type="scientific">Streptococcus thermophilus (strain CNRZ 1066)</name>
    <dbReference type="NCBI Taxonomy" id="299768"/>
    <lineage>
        <taxon>Bacteria</taxon>
        <taxon>Bacillati</taxon>
        <taxon>Bacillota</taxon>
        <taxon>Bacilli</taxon>
        <taxon>Lactobacillales</taxon>
        <taxon>Streptococcaceae</taxon>
        <taxon>Streptococcus</taxon>
    </lineage>
</organism>
<protein>
    <recommendedName>
        <fullName evidence="1">Asparagine--tRNA ligase</fullName>
        <ecNumber evidence="1">6.1.1.22</ecNumber>
    </recommendedName>
    <alternativeName>
        <fullName evidence="1">Asparaginyl-tRNA synthetase</fullName>
        <shortName evidence="1">AsnRS</shortName>
    </alternativeName>
</protein>
<name>SYN_STRT1</name>
<reference key="1">
    <citation type="journal article" date="2004" name="Nat. Biotechnol.">
        <title>Complete sequence and comparative genome analysis of the dairy bacterium Streptococcus thermophilus.</title>
        <authorList>
            <person name="Bolotin A."/>
            <person name="Quinquis B."/>
            <person name="Renault P."/>
            <person name="Sorokin A."/>
            <person name="Ehrlich S.D."/>
            <person name="Kulakauskas S."/>
            <person name="Lapidus A."/>
            <person name="Goltsman E."/>
            <person name="Mazur M."/>
            <person name="Pusch G.D."/>
            <person name="Fonstein M."/>
            <person name="Overbeek R."/>
            <person name="Kyprides N."/>
            <person name="Purnelle B."/>
            <person name="Prozzi D."/>
            <person name="Ngui K."/>
            <person name="Masuy D."/>
            <person name="Hancy F."/>
            <person name="Burteau S."/>
            <person name="Boutry M."/>
            <person name="Delcour J."/>
            <person name="Goffeau A."/>
            <person name="Hols P."/>
        </authorList>
    </citation>
    <scope>NUCLEOTIDE SEQUENCE [LARGE SCALE GENOMIC DNA]</scope>
    <source>
        <strain>CNRZ 1066</strain>
    </source>
</reference>
<gene>
    <name evidence="1" type="primary">asnS</name>
    <name type="ordered locus">str0818</name>
</gene>